<keyword id="KW-0249">Electron transport</keyword>
<keyword id="KW-0349">Heme</keyword>
<keyword id="KW-0408">Iron</keyword>
<keyword id="KW-0472">Membrane</keyword>
<keyword id="KW-0479">Metal-binding</keyword>
<keyword id="KW-0496">Mitochondrion</keyword>
<keyword id="KW-0999">Mitochondrion inner membrane</keyword>
<keyword id="KW-0679">Respiratory chain</keyword>
<keyword id="KW-0691">RNA editing</keyword>
<keyword id="KW-0812">Transmembrane</keyword>
<keyword id="KW-1133">Transmembrane helix</keyword>
<keyword id="KW-0813">Transport</keyword>
<keyword id="KW-0830">Ubiquinone</keyword>
<organism>
    <name type="scientific">Leishmania tarentolae</name>
    <name type="common">Sauroleishmania tarentolae</name>
    <dbReference type="NCBI Taxonomy" id="5689"/>
    <lineage>
        <taxon>Eukaryota</taxon>
        <taxon>Discoba</taxon>
        <taxon>Euglenozoa</taxon>
        <taxon>Kinetoplastea</taxon>
        <taxon>Metakinetoplastina</taxon>
        <taxon>Trypanosomatida</taxon>
        <taxon>Trypanosomatidae</taxon>
        <taxon>Leishmaniinae</taxon>
        <taxon>Leishmania</taxon>
        <taxon>lizard Leishmania</taxon>
    </lineage>
</organism>
<sequence length="371" mass="44555">MFFRVRFLLFFLLFRNLCCLLTSGCLLRVYGVGFSLGFFICMQIICGVCLAWLFFSCFICTNWYFVLFLWDFDLGFVIRSTHICFTSLLFFLLYVHIFKCIVLIILFDTHILVWAVGFIIYIFIVVIGFIGYVLPCTMMSYWGLTVFSNILATVPVIGTWLCYWIWGSEYINDFTLLKLHVLHVLLPFVLILVIFMHLFCLHYFMSSDGFCDRFAFYCERLCFCMWFYLRDMFLAFLILFYVVYFIFINWYFVFHEESWVIVDTLKTSDKILPEWFFLFLFGFLKAVPDKFTGLLLMVILLFSLFLFILNCILWFVYCRSSLLWFTYSLILFYSIFMSGFLALYVILAYPIWMELQFWVLLLFMLVVCRLD</sequence>
<evidence type="ECO:0000250" key="1"/>
<evidence type="ECO:0000250" key="2">
    <source>
        <dbReference type="UniProtKB" id="P00157"/>
    </source>
</evidence>
<evidence type="ECO:0000250" key="3">
    <source>
        <dbReference type="UniProtKB" id="P00163"/>
    </source>
</evidence>
<evidence type="ECO:0000255" key="4"/>
<evidence type="ECO:0000255" key="5">
    <source>
        <dbReference type="PROSITE-ProRule" id="PRU00967"/>
    </source>
</evidence>
<evidence type="ECO:0000255" key="6">
    <source>
        <dbReference type="PROSITE-ProRule" id="PRU00968"/>
    </source>
</evidence>
<evidence type="ECO:0000269" key="7">
    <source>
    </source>
</evidence>
<evidence type="ECO:0000269" key="8">
    <source>
    </source>
</evidence>
<name>CYB_LEITA</name>
<gene>
    <name type="primary">MT-CYB</name>
    <name type="synonym">COB</name>
    <name type="synonym">CYTB</name>
    <name type="synonym">MTCYB</name>
</gene>
<proteinExistence type="evidence at transcript level"/>
<feature type="chain" id="PRO_0000061094" description="Cytochrome b">
    <location>
        <begin position="1"/>
        <end position="371"/>
    </location>
</feature>
<feature type="transmembrane region" description="Helical" evidence="3">
    <location>
        <begin position="32"/>
        <end position="52"/>
    </location>
</feature>
<feature type="transmembrane region" description="Helical" evidence="3">
    <location>
        <begin position="76"/>
        <end position="98"/>
    </location>
</feature>
<feature type="transmembrane region" description="Helical" evidence="3">
    <location>
        <begin position="113"/>
        <end position="133"/>
    </location>
</feature>
<feature type="transmembrane region" description="Helical" evidence="3">
    <location>
        <begin position="179"/>
        <end position="199"/>
    </location>
</feature>
<feature type="transmembrane region" description="Helical" evidence="3">
    <location>
        <begin position="227"/>
        <end position="247"/>
    </location>
</feature>
<feature type="transmembrane region" description="Helical" evidence="4">
    <location>
        <begin position="296"/>
        <end position="316"/>
    </location>
</feature>
<feature type="transmembrane region" description="Helical" evidence="4">
    <location>
        <begin position="329"/>
        <end position="349"/>
    </location>
</feature>
<feature type="transmembrane region" description="Helical" evidence="4">
    <location>
        <begin position="350"/>
        <end position="370"/>
    </location>
</feature>
<feature type="binding site" description="axial binding residue" evidence="3">
    <location>
        <position position="82"/>
    </location>
    <ligand>
        <name>heme b</name>
        <dbReference type="ChEBI" id="CHEBI:60344"/>
        <label>b562</label>
    </ligand>
    <ligandPart>
        <name>Fe</name>
        <dbReference type="ChEBI" id="CHEBI:18248"/>
    </ligandPart>
</feature>
<feature type="binding site" description="axial binding residue" evidence="3">
    <location>
        <position position="96"/>
    </location>
    <ligand>
        <name>heme b</name>
        <dbReference type="ChEBI" id="CHEBI:60344"/>
        <label>b566</label>
    </ligand>
    <ligandPart>
        <name>Fe</name>
        <dbReference type="ChEBI" id="CHEBI:18248"/>
    </ligandPart>
</feature>
<feature type="binding site" description="axial binding residue" evidence="3">
    <location>
        <position position="183"/>
    </location>
    <ligand>
        <name>heme b</name>
        <dbReference type="ChEBI" id="CHEBI:60344"/>
        <label>b562</label>
    </ligand>
    <ligandPart>
        <name>Fe</name>
        <dbReference type="ChEBI" id="CHEBI:18248"/>
    </ligandPart>
</feature>
<feature type="binding site" description="axial binding residue" evidence="3">
    <location>
        <position position="197"/>
    </location>
    <ligand>
        <name>heme b</name>
        <dbReference type="ChEBI" id="CHEBI:60344"/>
        <label>b566</label>
    </ligand>
    <ligandPart>
        <name>Fe</name>
        <dbReference type="ChEBI" id="CHEBI:18248"/>
    </ligandPart>
</feature>
<feature type="binding site" evidence="2">
    <location>
        <position position="202"/>
    </location>
    <ligand>
        <name>a ubiquinone</name>
        <dbReference type="ChEBI" id="CHEBI:16389"/>
    </ligand>
</feature>
<accession>P14548</accession>
<geneLocation type="mitochondrion"/>
<protein>
    <recommendedName>
        <fullName>Cytochrome b</fullName>
    </recommendedName>
    <alternativeName>
        <fullName>Complex III subunit 3</fullName>
    </alternativeName>
    <alternativeName>
        <fullName>Complex III subunit III</fullName>
    </alternativeName>
    <alternativeName>
        <fullName>Cytochrome b-c1 complex subunit 3</fullName>
    </alternativeName>
    <alternativeName>
        <fullName>Ubiquinol-cytochrome-c reductase complex cytochrome b subunit</fullName>
    </alternativeName>
</protein>
<reference key="1">
    <citation type="journal article" date="1988" name="Cell">
        <title>Editing of kinetoplastid mitochondrial mRNAs by uridine addition and deletion generates conserved amino acid sequences and AUG initiation codons.</title>
        <authorList>
            <person name="Shaw J.M."/>
            <person name="Feagin J.E."/>
            <person name="Stuart K.D."/>
            <person name="Simpson L."/>
        </authorList>
    </citation>
    <scope>NUCLEOTIDE SEQUENCE [MRNA]</scope>
    <scope>RNA EDITING</scope>
</reference>
<reference key="2">
    <citation type="journal article" date="1985" name="Nucleic Acids Res.">
        <title>Mapping and 5' end determination of kinetoplast maxicircle gene transcripts from Leishmania tarentolae.</title>
        <authorList>
            <person name="Simpson A.M."/>
            <person name="Necklemann N."/>
            <person name="la Cruz V.F."/>
            <person name="Muhich M.L."/>
            <person name="Simpson L."/>
        </authorList>
    </citation>
    <scope>NUCLEOTIDE SEQUENCE [GENOMIC DNA]</scope>
</reference>
<reference key="3">
    <citation type="journal article" date="1988" name="Proc. Natl. Acad. Sci. U.S.A.">
        <title>Creation of AUG initiation codons by addition of uridines within cytochrome b transcripts of kinetoplastids.</title>
        <authorList>
            <person name="Feagin J.E."/>
            <person name="Shaw J.M."/>
            <person name="Simpson L."/>
            <person name="Stuart K."/>
        </authorList>
    </citation>
    <scope>NUCLEOTIDE SEQUENCE [MRNA] OF 1-48</scope>
    <scope>RNA EDITING</scope>
</reference>
<reference key="4">
    <citation type="journal article" date="1984" name="J. Biol. Chem.">
        <title>Sequences of six genes and several open reading frames in the kinetoplast maxicircle DNA of Leishmania tarentolae.</title>
        <authorList>
            <person name="de la Cruz V.F."/>
            <person name="Neckelmann N."/>
            <person name="Simpson L."/>
        </authorList>
    </citation>
    <scope>NUCLEOTIDE SEQUENCE [GENOMIC DNA] OF 21-371</scope>
</reference>
<dbReference type="EMBL" id="L07542">
    <property type="protein sequence ID" value="AAA31879.1"/>
    <property type="status" value="ALT_SEQ"/>
    <property type="molecule type" value="mRNA"/>
</dbReference>
<dbReference type="EMBL" id="M10126">
    <property type="status" value="NOT_ANNOTATED_CDS"/>
    <property type="molecule type" value="Genomic_DNA"/>
</dbReference>
<dbReference type="EMBL" id="M19065">
    <property type="protein sequence ID" value="AAA31878.1"/>
    <property type="molecule type" value="mRNA"/>
</dbReference>
<dbReference type="PIR" id="H22848">
    <property type="entry name" value="H22848"/>
</dbReference>
<dbReference type="SMR" id="P14548"/>
<dbReference type="GO" id="GO:0005743">
    <property type="term" value="C:mitochondrial inner membrane"/>
    <property type="evidence" value="ECO:0007669"/>
    <property type="project" value="UniProtKB-SubCell"/>
</dbReference>
<dbReference type="GO" id="GO:0046872">
    <property type="term" value="F:metal ion binding"/>
    <property type="evidence" value="ECO:0007669"/>
    <property type="project" value="UniProtKB-KW"/>
</dbReference>
<dbReference type="GO" id="GO:0008121">
    <property type="term" value="F:ubiquinol-cytochrome-c reductase activity"/>
    <property type="evidence" value="ECO:0007669"/>
    <property type="project" value="TreeGrafter"/>
</dbReference>
<dbReference type="GO" id="GO:0006122">
    <property type="term" value="P:mitochondrial electron transport, ubiquinol to cytochrome c"/>
    <property type="evidence" value="ECO:0007669"/>
    <property type="project" value="TreeGrafter"/>
</dbReference>
<dbReference type="CDD" id="cd00284">
    <property type="entry name" value="Cytochrome_b_N"/>
    <property type="match status" value="1"/>
</dbReference>
<dbReference type="Gene3D" id="1.20.810.10">
    <property type="entry name" value="Cytochrome Bc1 Complex, Chain C"/>
    <property type="match status" value="1"/>
</dbReference>
<dbReference type="InterPro" id="IPR005798">
    <property type="entry name" value="Cyt_b/b6_C"/>
</dbReference>
<dbReference type="InterPro" id="IPR036150">
    <property type="entry name" value="Cyt_b/b6_C_sf"/>
</dbReference>
<dbReference type="InterPro" id="IPR005797">
    <property type="entry name" value="Cyt_b/b6_N"/>
</dbReference>
<dbReference type="InterPro" id="IPR027387">
    <property type="entry name" value="Cytb/b6-like_sf"/>
</dbReference>
<dbReference type="InterPro" id="IPR048259">
    <property type="entry name" value="Cytochrome_b_N_euk/bac"/>
</dbReference>
<dbReference type="InterPro" id="IPR016174">
    <property type="entry name" value="Di-haem_cyt_TM"/>
</dbReference>
<dbReference type="PANTHER" id="PTHR19271">
    <property type="entry name" value="CYTOCHROME B"/>
    <property type="match status" value="1"/>
</dbReference>
<dbReference type="PANTHER" id="PTHR19271:SF16">
    <property type="entry name" value="CYTOCHROME B"/>
    <property type="match status" value="1"/>
</dbReference>
<dbReference type="Pfam" id="PF00032">
    <property type="entry name" value="Cytochrom_B_C"/>
    <property type="match status" value="1"/>
</dbReference>
<dbReference type="Pfam" id="PF00033">
    <property type="entry name" value="Cytochrome_B"/>
    <property type="match status" value="1"/>
</dbReference>
<dbReference type="SUPFAM" id="SSF81648">
    <property type="entry name" value="a domain/subunit of cytochrome bc1 complex (Ubiquinol-cytochrome c reductase)"/>
    <property type="match status" value="1"/>
</dbReference>
<dbReference type="SUPFAM" id="SSF81342">
    <property type="entry name" value="Transmembrane di-heme cytochromes"/>
    <property type="match status" value="1"/>
</dbReference>
<dbReference type="PROSITE" id="PS51003">
    <property type="entry name" value="CYTB_CTER"/>
    <property type="match status" value="1"/>
</dbReference>
<dbReference type="PROSITE" id="PS51002">
    <property type="entry name" value="CYTB_NTER"/>
    <property type="match status" value="1"/>
</dbReference>
<comment type="function">
    <text evidence="3">Component of the ubiquinol-cytochrome c reductase complex (complex III or cytochrome b-c1 complex) that is part of the mitochondrial respiratory chain. The b-c1 complex mediates electron transfer from ubiquinol to cytochrome c. Contributes to the generation of a proton gradient across the mitochondrial membrane that is then used for ATP synthesis.</text>
</comment>
<comment type="cofactor">
    <cofactor evidence="3">
        <name>heme b</name>
        <dbReference type="ChEBI" id="CHEBI:60344"/>
    </cofactor>
    <text evidence="3">Binds 2 heme b groups non-covalently.</text>
</comment>
<comment type="subunit">
    <text evidence="1">The main subunits of complex b-c1 are: cytochrome b, cytochrome c1 and the Rieske protein.</text>
</comment>
<comment type="subcellular location">
    <subcellularLocation>
        <location evidence="3">Mitochondrion inner membrane</location>
        <topology evidence="3">Multi-pass membrane protein</topology>
    </subcellularLocation>
</comment>
<comment type="RNA editing" locationType="Not_applicable">
    <text evidence="7 8">Some positions are modified by RNA editing via nucleotide insertion or deletion. The initiator methionine is created by RNA editing.</text>
</comment>
<comment type="miscellaneous">
    <text evidence="1">Heme 1 (or BL or b562) is low-potential and absorbs at about 562 nm, and heme 2 (or BH or b566) is high-potential and absorbs at about 566 nm.</text>
</comment>
<comment type="similarity">
    <text evidence="5 6">Belongs to the cytochrome b family.</text>
</comment>
<comment type="caution">
    <text evidence="3">The protein contains an even number of transmembrane helices, fewer than predicted by bioinformatics tools.</text>
</comment>